<feature type="chain" id="PRO_1000213954" description="Uridylate kinase">
    <location>
        <begin position="1"/>
        <end position="226"/>
    </location>
</feature>
<feature type="binding site" evidence="1">
    <location>
        <begin position="6"/>
        <end position="10"/>
    </location>
    <ligand>
        <name>ATP</name>
        <dbReference type="ChEBI" id="CHEBI:30616"/>
    </ligand>
</feature>
<feature type="binding site" evidence="1">
    <location>
        <position position="43"/>
    </location>
    <ligand>
        <name>UMP</name>
        <dbReference type="ChEBI" id="CHEBI:57865"/>
    </ligand>
</feature>
<feature type="binding site" evidence="1">
    <location>
        <position position="44"/>
    </location>
    <ligand>
        <name>ATP</name>
        <dbReference type="ChEBI" id="CHEBI:30616"/>
    </ligand>
</feature>
<feature type="binding site" evidence="1">
    <location>
        <position position="48"/>
    </location>
    <ligand>
        <name>ATP</name>
        <dbReference type="ChEBI" id="CHEBI:30616"/>
    </ligand>
</feature>
<feature type="binding site" evidence="1">
    <location>
        <position position="65"/>
    </location>
    <ligand>
        <name>UMP</name>
        <dbReference type="ChEBI" id="CHEBI:57865"/>
    </ligand>
</feature>
<feature type="binding site" evidence="1">
    <location>
        <begin position="113"/>
        <end position="119"/>
    </location>
    <ligand>
        <name>UMP</name>
        <dbReference type="ChEBI" id="CHEBI:57865"/>
    </ligand>
</feature>
<feature type="binding site" evidence="1">
    <location>
        <position position="139"/>
    </location>
    <ligand>
        <name>ATP</name>
        <dbReference type="ChEBI" id="CHEBI:30616"/>
    </ligand>
</feature>
<feature type="binding site" evidence="1">
    <location>
        <position position="140"/>
    </location>
    <ligand>
        <name>ATP</name>
        <dbReference type="ChEBI" id="CHEBI:30616"/>
    </ligand>
</feature>
<feature type="binding site" evidence="1">
    <location>
        <position position="145"/>
    </location>
    <ligand>
        <name>ATP</name>
        <dbReference type="ChEBI" id="CHEBI:30616"/>
    </ligand>
</feature>
<feature type="binding site" evidence="1">
    <location>
        <position position="148"/>
    </location>
    <ligand>
        <name>ATP</name>
        <dbReference type="ChEBI" id="CHEBI:30616"/>
    </ligand>
</feature>
<accession>C3N5A5</accession>
<organism>
    <name type="scientific">Saccharolobus islandicus (strain M.16.27)</name>
    <name type="common">Sulfolobus islandicus</name>
    <dbReference type="NCBI Taxonomy" id="427318"/>
    <lineage>
        <taxon>Archaea</taxon>
        <taxon>Thermoproteota</taxon>
        <taxon>Thermoprotei</taxon>
        <taxon>Sulfolobales</taxon>
        <taxon>Sulfolobaceae</taxon>
        <taxon>Saccharolobus</taxon>
    </lineage>
</organism>
<gene>
    <name evidence="1" type="primary">pyrH</name>
    <name type="ordered locus">M1627_1297</name>
</gene>
<keyword id="KW-0067">ATP-binding</keyword>
<keyword id="KW-0963">Cytoplasm</keyword>
<keyword id="KW-0418">Kinase</keyword>
<keyword id="KW-0547">Nucleotide-binding</keyword>
<keyword id="KW-0665">Pyrimidine biosynthesis</keyword>
<keyword id="KW-0808">Transferase</keyword>
<proteinExistence type="inferred from homology"/>
<name>PYRH_SACI3</name>
<reference key="1">
    <citation type="journal article" date="2009" name="Proc. Natl. Acad. Sci. U.S.A.">
        <title>Biogeography of the Sulfolobus islandicus pan-genome.</title>
        <authorList>
            <person name="Reno M.L."/>
            <person name="Held N.L."/>
            <person name="Fields C.J."/>
            <person name="Burke P.V."/>
            <person name="Whitaker R.J."/>
        </authorList>
    </citation>
    <scope>NUCLEOTIDE SEQUENCE [LARGE SCALE GENOMIC DNA]</scope>
    <source>
        <strain>M.16.27</strain>
    </source>
</reference>
<comment type="function">
    <text evidence="1">Catalyzes the reversible phosphorylation of UMP to UDP.</text>
</comment>
<comment type="catalytic activity">
    <reaction evidence="1">
        <text>UMP + ATP = UDP + ADP</text>
        <dbReference type="Rhea" id="RHEA:24400"/>
        <dbReference type="ChEBI" id="CHEBI:30616"/>
        <dbReference type="ChEBI" id="CHEBI:57865"/>
        <dbReference type="ChEBI" id="CHEBI:58223"/>
        <dbReference type="ChEBI" id="CHEBI:456216"/>
        <dbReference type="EC" id="2.7.4.22"/>
    </reaction>
</comment>
<comment type="activity regulation">
    <text evidence="1">Inhibited by UTP.</text>
</comment>
<comment type="pathway">
    <text evidence="1">Pyrimidine metabolism; CTP biosynthesis via de novo pathway; UDP from UMP (UMPK route): step 1/1.</text>
</comment>
<comment type="subunit">
    <text evidence="1">Homohexamer.</text>
</comment>
<comment type="subcellular location">
    <subcellularLocation>
        <location evidence="1">Cytoplasm</location>
    </subcellularLocation>
</comment>
<comment type="similarity">
    <text evidence="1">Belongs to the UMP kinase family.</text>
</comment>
<sequence length="226" mass="25098">MNIILKISGKFFDEDNVNNLIVLRESIRELTYNGFRVGIVTGGGSTARRYIKLAREIGIGEAYLDLLGIWASRLNAYLVMFSLQDLAYMHVPQSLEEFIQDWSHGKVVVTGGFQPGQSTAAVAALVAEASSSKTLVVATNVDGVYEKDPRVYTDVKLIPHLTTQDLRKILEGSQSVQAGTYELLDPLAIKIVERSKIRVVVMNYRKLNRIINILKGEEVSSIIEPT</sequence>
<protein>
    <recommendedName>
        <fullName evidence="1">Uridylate kinase</fullName>
        <shortName evidence="1">UK</shortName>
        <ecNumber evidence="1">2.7.4.22</ecNumber>
    </recommendedName>
    <alternativeName>
        <fullName evidence="1">Uridine monophosphate kinase</fullName>
        <shortName evidence="1">UMP kinase</shortName>
        <shortName evidence="1">UMPK</shortName>
    </alternativeName>
</protein>
<dbReference type="EC" id="2.7.4.22" evidence="1"/>
<dbReference type="EMBL" id="CP001401">
    <property type="protein sequence ID" value="ACP55180.1"/>
    <property type="molecule type" value="Genomic_DNA"/>
</dbReference>
<dbReference type="RefSeq" id="WP_012718789.1">
    <property type="nucleotide sequence ID" value="NC_012632.1"/>
</dbReference>
<dbReference type="SMR" id="C3N5A5"/>
<dbReference type="GeneID" id="84058613"/>
<dbReference type="KEGG" id="sim:M1627_1297"/>
<dbReference type="HOGENOM" id="CLU_079546_0_0_2"/>
<dbReference type="UniPathway" id="UPA00159">
    <property type="reaction ID" value="UER00275"/>
</dbReference>
<dbReference type="Proteomes" id="UP000002307">
    <property type="component" value="Chromosome"/>
</dbReference>
<dbReference type="GO" id="GO:0005737">
    <property type="term" value="C:cytoplasm"/>
    <property type="evidence" value="ECO:0007669"/>
    <property type="project" value="UniProtKB-SubCell"/>
</dbReference>
<dbReference type="GO" id="GO:0005524">
    <property type="term" value="F:ATP binding"/>
    <property type="evidence" value="ECO:0007669"/>
    <property type="project" value="UniProtKB-KW"/>
</dbReference>
<dbReference type="GO" id="GO:0033862">
    <property type="term" value="F:UMP kinase activity"/>
    <property type="evidence" value="ECO:0007669"/>
    <property type="project" value="UniProtKB-EC"/>
</dbReference>
<dbReference type="GO" id="GO:0044210">
    <property type="term" value="P:'de novo' CTP biosynthetic process"/>
    <property type="evidence" value="ECO:0007669"/>
    <property type="project" value="UniProtKB-UniRule"/>
</dbReference>
<dbReference type="GO" id="GO:0006225">
    <property type="term" value="P:UDP biosynthetic process"/>
    <property type="evidence" value="ECO:0007669"/>
    <property type="project" value="TreeGrafter"/>
</dbReference>
<dbReference type="CDD" id="cd04253">
    <property type="entry name" value="AAK_UMPK-PyrH-Pf"/>
    <property type="match status" value="1"/>
</dbReference>
<dbReference type="FunFam" id="3.40.1160.10:FF:000030">
    <property type="entry name" value="Uridylate kinase"/>
    <property type="match status" value="1"/>
</dbReference>
<dbReference type="Gene3D" id="3.40.1160.10">
    <property type="entry name" value="Acetylglutamate kinase-like"/>
    <property type="match status" value="1"/>
</dbReference>
<dbReference type="HAMAP" id="MF_01220_A">
    <property type="entry name" value="PyrH_A"/>
    <property type="match status" value="1"/>
</dbReference>
<dbReference type="InterPro" id="IPR036393">
    <property type="entry name" value="AceGlu_kinase-like_sf"/>
</dbReference>
<dbReference type="InterPro" id="IPR001048">
    <property type="entry name" value="Asp/Glu/Uridylate_kinase"/>
</dbReference>
<dbReference type="InterPro" id="IPR011817">
    <property type="entry name" value="Uridylate_kinase"/>
</dbReference>
<dbReference type="InterPro" id="IPR011818">
    <property type="entry name" value="Uridylate_kinase_arch/spir"/>
</dbReference>
<dbReference type="NCBIfam" id="TIGR02076">
    <property type="entry name" value="pyrH_arch"/>
    <property type="match status" value="1"/>
</dbReference>
<dbReference type="PANTHER" id="PTHR42833">
    <property type="entry name" value="URIDYLATE KINASE"/>
    <property type="match status" value="1"/>
</dbReference>
<dbReference type="PANTHER" id="PTHR42833:SF4">
    <property type="entry name" value="URIDYLATE KINASE PUMPKIN, CHLOROPLASTIC"/>
    <property type="match status" value="1"/>
</dbReference>
<dbReference type="Pfam" id="PF00696">
    <property type="entry name" value="AA_kinase"/>
    <property type="match status" value="1"/>
</dbReference>
<dbReference type="PIRSF" id="PIRSF005650">
    <property type="entry name" value="Uridylate_kin"/>
    <property type="match status" value="1"/>
</dbReference>
<dbReference type="SUPFAM" id="SSF53633">
    <property type="entry name" value="Carbamate kinase-like"/>
    <property type="match status" value="1"/>
</dbReference>
<evidence type="ECO:0000255" key="1">
    <source>
        <dbReference type="HAMAP-Rule" id="MF_01220"/>
    </source>
</evidence>